<organism>
    <name type="scientific">Buchnera aphidicola subsp. Schizaphis graminum (strain Sg)</name>
    <dbReference type="NCBI Taxonomy" id="198804"/>
    <lineage>
        <taxon>Bacteria</taxon>
        <taxon>Pseudomonadati</taxon>
        <taxon>Pseudomonadota</taxon>
        <taxon>Gammaproteobacteria</taxon>
        <taxon>Enterobacterales</taxon>
        <taxon>Erwiniaceae</taxon>
        <taxon>Buchnera</taxon>
    </lineage>
</organism>
<feature type="chain" id="PRO_0000190471" description="Ribonucleoside-diphosphate reductase subunit beta">
    <location>
        <begin position="1"/>
        <end position="376"/>
    </location>
</feature>
<feature type="active site" evidence="2">
    <location>
        <position position="123"/>
    </location>
</feature>
<feature type="binding site" evidence="2">
    <location>
        <position position="85"/>
    </location>
    <ligand>
        <name>Fe cation</name>
        <dbReference type="ChEBI" id="CHEBI:24875"/>
        <label>1</label>
    </ligand>
</feature>
<feature type="binding site" evidence="2">
    <location>
        <position position="116"/>
    </location>
    <ligand>
        <name>Fe cation</name>
        <dbReference type="ChEBI" id="CHEBI:24875"/>
        <label>1</label>
    </ligand>
</feature>
<feature type="binding site" evidence="1">
    <location>
        <position position="116"/>
    </location>
    <ligand>
        <name>Fe cation</name>
        <dbReference type="ChEBI" id="CHEBI:24875"/>
        <label>2</label>
    </ligand>
</feature>
<feature type="binding site" evidence="2">
    <location>
        <position position="119"/>
    </location>
    <ligand>
        <name>Fe cation</name>
        <dbReference type="ChEBI" id="CHEBI:24875"/>
        <label>1</label>
    </ligand>
</feature>
<feature type="binding site" evidence="1">
    <location>
        <position position="205"/>
    </location>
    <ligand>
        <name>Fe cation</name>
        <dbReference type="ChEBI" id="CHEBI:24875"/>
        <label>2</label>
    </ligand>
</feature>
<feature type="binding site" evidence="1">
    <location>
        <position position="239"/>
    </location>
    <ligand>
        <name>Fe cation</name>
        <dbReference type="ChEBI" id="CHEBI:24875"/>
        <label>2</label>
    </ligand>
</feature>
<feature type="binding site" evidence="1">
    <location>
        <position position="242"/>
    </location>
    <ligand>
        <name>Fe cation</name>
        <dbReference type="ChEBI" id="CHEBI:24875"/>
        <label>2</label>
    </ligand>
</feature>
<reference key="1">
    <citation type="journal article" date="2002" name="Science">
        <title>50 million years of genomic stasis in endosymbiotic bacteria.</title>
        <authorList>
            <person name="Tamas I."/>
            <person name="Klasson L."/>
            <person name="Canbaeck B."/>
            <person name="Naeslund A.K."/>
            <person name="Eriksson A.-S."/>
            <person name="Wernegreen J.J."/>
            <person name="Sandstroem J.P."/>
            <person name="Moran N.A."/>
            <person name="Andersson S.G.E."/>
        </authorList>
    </citation>
    <scope>NUCLEOTIDE SEQUENCE [LARGE SCALE GENOMIC DNA]</scope>
    <source>
        <strain>Sg</strain>
    </source>
</reference>
<gene>
    <name type="primary">nrdB</name>
    <name type="ordered locus">BUsg_172</name>
</gene>
<accession>Q8K9W4</accession>
<name>RIR2_BUCAP</name>
<protein>
    <recommendedName>
        <fullName>Ribonucleoside-diphosphate reductase subunit beta</fullName>
        <ecNumber>1.17.4.1</ecNumber>
    </recommendedName>
    <alternativeName>
        <fullName>Ribonucleotide reductase small subunit</fullName>
    </alternativeName>
</protein>
<evidence type="ECO:0000250" key="1"/>
<evidence type="ECO:0000255" key="2">
    <source>
        <dbReference type="PROSITE-ProRule" id="PRU10014"/>
    </source>
</evidence>
<evidence type="ECO:0000305" key="3"/>
<sequence>MSYTTFSKKKNNQLKEPMFFGQSVNIARYDQQKYNIFEKLIEKQLSFFWRPEEIDLSKDRIDFDNLPSNEKHIFISNLKYQTLLDSIQGRSPNIAFLPIVSIPELETWIETWSFSETIHSRSYTHIIRNIINNPSIVFDDIISNKNINDRAQDISIYYDELIRITAYWHLLGEGNHKINEKKVEINLKLLKRRLYLCLISVNVLEAIRFYVSFACSFAFAEREIMEGNAKIIRLIARDEALHLTGTQHILNILNNEKNNENMKNTVLECREEAIKIFISASEQEKKWAKYLFQDGSMLGLNKDILCQYIEYITNIRMHAIGFKMPFEKTSNPIPWINSWLNSDYIQAAPQETEISSYLVGQIESEISNQEFKNFKL</sequence>
<proteinExistence type="inferred from homology"/>
<keyword id="KW-0215">Deoxyribonucleotide synthesis</keyword>
<keyword id="KW-0408">Iron</keyword>
<keyword id="KW-0479">Metal-binding</keyword>
<keyword id="KW-0560">Oxidoreductase</keyword>
<comment type="function">
    <text evidence="1">Provides the precursors necessary for DNA synthesis. Catalyzes the biosynthesis of deoxyribonucleotides from the corresponding ribonucleotides (By similarity).</text>
</comment>
<comment type="catalytic activity">
    <reaction evidence="2">
        <text>a 2'-deoxyribonucleoside 5'-diphosphate + [thioredoxin]-disulfide + H2O = a ribonucleoside 5'-diphosphate + [thioredoxin]-dithiol</text>
        <dbReference type="Rhea" id="RHEA:23252"/>
        <dbReference type="Rhea" id="RHEA-COMP:10698"/>
        <dbReference type="Rhea" id="RHEA-COMP:10700"/>
        <dbReference type="ChEBI" id="CHEBI:15377"/>
        <dbReference type="ChEBI" id="CHEBI:29950"/>
        <dbReference type="ChEBI" id="CHEBI:50058"/>
        <dbReference type="ChEBI" id="CHEBI:57930"/>
        <dbReference type="ChEBI" id="CHEBI:73316"/>
        <dbReference type="EC" id="1.17.4.1"/>
    </reaction>
</comment>
<comment type="cofactor">
    <cofactor evidence="1">
        <name>Fe cation</name>
        <dbReference type="ChEBI" id="CHEBI:24875"/>
    </cofactor>
    <text evidence="1">Binds 2 iron ions per subunit.</text>
</comment>
<comment type="subunit">
    <text evidence="1">Tetramer of two alpha and two beta subunits.</text>
</comment>
<comment type="similarity">
    <text evidence="3">Belongs to the ribonucleoside diphosphate reductase small chain family.</text>
</comment>
<dbReference type="EC" id="1.17.4.1"/>
<dbReference type="EMBL" id="AE013218">
    <property type="protein sequence ID" value="AAM67738.1"/>
    <property type="molecule type" value="Genomic_DNA"/>
</dbReference>
<dbReference type="RefSeq" id="WP_011053705.1">
    <property type="nucleotide sequence ID" value="NC_004061.1"/>
</dbReference>
<dbReference type="SMR" id="Q8K9W4"/>
<dbReference type="STRING" id="198804.BUsg_172"/>
<dbReference type="GeneID" id="93003640"/>
<dbReference type="KEGG" id="bas:BUsg_172"/>
<dbReference type="eggNOG" id="COG0208">
    <property type="taxonomic scope" value="Bacteria"/>
</dbReference>
<dbReference type="HOGENOM" id="CLU_062403_0_0_6"/>
<dbReference type="Proteomes" id="UP000000416">
    <property type="component" value="Chromosome"/>
</dbReference>
<dbReference type="GO" id="GO:0046872">
    <property type="term" value="F:metal ion binding"/>
    <property type="evidence" value="ECO:0007669"/>
    <property type="project" value="UniProtKB-KW"/>
</dbReference>
<dbReference type="GO" id="GO:0004748">
    <property type="term" value="F:ribonucleoside-diphosphate reductase activity, thioredoxin disulfide as acceptor"/>
    <property type="evidence" value="ECO:0007669"/>
    <property type="project" value="UniProtKB-EC"/>
</dbReference>
<dbReference type="GO" id="GO:0009263">
    <property type="term" value="P:deoxyribonucleotide biosynthetic process"/>
    <property type="evidence" value="ECO:0007669"/>
    <property type="project" value="UniProtKB-KW"/>
</dbReference>
<dbReference type="CDD" id="cd01049">
    <property type="entry name" value="RNRR2"/>
    <property type="match status" value="1"/>
</dbReference>
<dbReference type="FunFam" id="1.10.620.20:FF:000001">
    <property type="entry name" value="Ribonucleoside-diphosphate reductase 1 subunit beta"/>
    <property type="match status" value="1"/>
</dbReference>
<dbReference type="Gene3D" id="1.10.620.20">
    <property type="entry name" value="Ribonucleotide Reductase, subunit A"/>
    <property type="match status" value="1"/>
</dbReference>
<dbReference type="InterPro" id="IPR009078">
    <property type="entry name" value="Ferritin-like_SF"/>
</dbReference>
<dbReference type="InterPro" id="IPR012348">
    <property type="entry name" value="RNR-like"/>
</dbReference>
<dbReference type="InterPro" id="IPR033909">
    <property type="entry name" value="RNR_small"/>
</dbReference>
<dbReference type="InterPro" id="IPR030475">
    <property type="entry name" value="RNR_small_AS"/>
</dbReference>
<dbReference type="InterPro" id="IPR000358">
    <property type="entry name" value="RNR_small_fam"/>
</dbReference>
<dbReference type="NCBIfam" id="NF006576">
    <property type="entry name" value="PRK09101.1"/>
    <property type="match status" value="1"/>
</dbReference>
<dbReference type="PANTHER" id="PTHR23409">
    <property type="entry name" value="RIBONUCLEOSIDE-DIPHOSPHATE REDUCTASE SMALL CHAIN"/>
    <property type="match status" value="1"/>
</dbReference>
<dbReference type="PANTHER" id="PTHR23409:SF18">
    <property type="entry name" value="RIBONUCLEOSIDE-DIPHOSPHATE REDUCTASE SUBUNIT M2"/>
    <property type="match status" value="1"/>
</dbReference>
<dbReference type="Pfam" id="PF00268">
    <property type="entry name" value="Ribonuc_red_sm"/>
    <property type="match status" value="1"/>
</dbReference>
<dbReference type="SUPFAM" id="SSF47240">
    <property type="entry name" value="Ferritin-like"/>
    <property type="match status" value="1"/>
</dbReference>
<dbReference type="PROSITE" id="PS00368">
    <property type="entry name" value="RIBORED_SMALL"/>
    <property type="match status" value="1"/>
</dbReference>